<keyword id="KW-0143">Chaperone</keyword>
<keyword id="KW-0963">Cytoplasm</keyword>
<protein>
    <recommendedName>
        <fullName evidence="1">Regulatory protein ViaA</fullName>
    </recommendedName>
    <alternativeName>
        <fullName evidence="1">VWA interacting with AAA+ ATPase</fullName>
    </alternativeName>
</protein>
<sequence length="483" mass="55877">MLTLDTLNVMLAVSEEGLIEEMIIALLASPQLAVFFEKFPRLKAAITDDVPRWREALRSRLKDARVPPELTEEVMCYQQSQLLSTPQFIVQLPQILDLLHRLNSPWAEQARQLVDANSAITSALHTLFLQRWRLSLIVQATTLNQQLLEEEREQLLSEVQERMTLSGQLEPILADNNTAAGRLWDMSAGQLKRGDYQLIVKYGEFLNEQPELKRLAEQLGRSREAKSIPRNDAQMETFRTMVREPATVPEQVDGLQQSDDILRLLPPELATLGITELEYEFYRRLVEKQLLTYRLHGESWREKVIERPVVHKDYDEQPRGPFIVCVDTSGSMGGFNEQCAKAFCLALMRIALAENRRCYIMLFSTEIVRYELSGPQGIEQAIRFLSQQFRGGTDLASCFRAIMERLQSREWFDADAVVISDFIAQRLPDDVTSKVKELQRVHQHRFHAVAMSAHGKPGIMRIFDHIWRFDTGMRSRLLRRWRR</sequence>
<comment type="function">
    <text evidence="1">Component of the RavA-ViaA chaperone complex, which may act on the membrane to optimize the function of some of the respiratory chains. ViaA stimulates the ATPase activity of RavA.</text>
</comment>
<comment type="subunit">
    <text evidence="1">Homodimer. Interacts with RavA.</text>
</comment>
<comment type="subcellular location">
    <subcellularLocation>
        <location evidence="1">Cytoplasm</location>
    </subcellularLocation>
</comment>
<comment type="similarity">
    <text evidence="1">Belongs to the ViaA family.</text>
</comment>
<gene>
    <name evidence="1" type="primary">viaA</name>
    <name type="ordered locus">EcolC_4249</name>
</gene>
<evidence type="ECO:0000255" key="1">
    <source>
        <dbReference type="HAMAP-Rule" id="MF_01626"/>
    </source>
</evidence>
<dbReference type="EMBL" id="CP000946">
    <property type="protein sequence ID" value="ACA79845.1"/>
    <property type="molecule type" value="Genomic_DNA"/>
</dbReference>
<dbReference type="RefSeq" id="WP_000956615.1">
    <property type="nucleotide sequence ID" value="NZ_MTFT01000013.1"/>
</dbReference>
<dbReference type="SMR" id="B1IWZ3"/>
<dbReference type="KEGG" id="ecl:EcolC_4249"/>
<dbReference type="HOGENOM" id="CLU_022130_0_0_6"/>
<dbReference type="GO" id="GO:0005829">
    <property type="term" value="C:cytosol"/>
    <property type="evidence" value="ECO:0007669"/>
    <property type="project" value="TreeGrafter"/>
</dbReference>
<dbReference type="CDD" id="cd01462">
    <property type="entry name" value="VWA_YIEM_type"/>
    <property type="match status" value="1"/>
</dbReference>
<dbReference type="Gene3D" id="3.40.50.410">
    <property type="entry name" value="von Willebrand factor, type A domain"/>
    <property type="match status" value="1"/>
</dbReference>
<dbReference type="HAMAP" id="MF_01626">
    <property type="entry name" value="ViaA"/>
    <property type="match status" value="1"/>
</dbReference>
<dbReference type="InterPro" id="IPR008912">
    <property type="entry name" value="Uncharacterised_CoxE"/>
</dbReference>
<dbReference type="InterPro" id="IPR023481">
    <property type="entry name" value="Uncharacterised_ViaA"/>
</dbReference>
<dbReference type="InterPro" id="IPR002035">
    <property type="entry name" value="VWF_A"/>
</dbReference>
<dbReference type="InterPro" id="IPR036465">
    <property type="entry name" value="vWFA_dom_sf"/>
</dbReference>
<dbReference type="NCBIfam" id="NF008230">
    <property type="entry name" value="PRK10997.1"/>
    <property type="match status" value="1"/>
</dbReference>
<dbReference type="PANTHER" id="PTHR36846">
    <property type="entry name" value="PROTEIN VIAA"/>
    <property type="match status" value="1"/>
</dbReference>
<dbReference type="PANTHER" id="PTHR36846:SF1">
    <property type="entry name" value="PROTEIN VIAA"/>
    <property type="match status" value="1"/>
</dbReference>
<dbReference type="Pfam" id="PF05762">
    <property type="entry name" value="VWA_CoxE"/>
    <property type="match status" value="1"/>
</dbReference>
<dbReference type="SMART" id="SM00327">
    <property type="entry name" value="VWA"/>
    <property type="match status" value="1"/>
</dbReference>
<dbReference type="SUPFAM" id="SSF53300">
    <property type="entry name" value="vWA-like"/>
    <property type="match status" value="1"/>
</dbReference>
<proteinExistence type="inferred from homology"/>
<name>VIAA_ECOLC</name>
<feature type="chain" id="PRO_1000088099" description="Regulatory protein ViaA">
    <location>
        <begin position="1"/>
        <end position="483"/>
    </location>
</feature>
<organism>
    <name type="scientific">Escherichia coli (strain ATCC 8739 / DSM 1576 / NBRC 3972 / NCIMB 8545 / WDCM 00012 / Crooks)</name>
    <dbReference type="NCBI Taxonomy" id="481805"/>
    <lineage>
        <taxon>Bacteria</taxon>
        <taxon>Pseudomonadati</taxon>
        <taxon>Pseudomonadota</taxon>
        <taxon>Gammaproteobacteria</taxon>
        <taxon>Enterobacterales</taxon>
        <taxon>Enterobacteriaceae</taxon>
        <taxon>Escherichia</taxon>
    </lineage>
</organism>
<reference key="1">
    <citation type="submission" date="2008-02" db="EMBL/GenBank/DDBJ databases">
        <title>Complete sequence of Escherichia coli C str. ATCC 8739.</title>
        <authorList>
            <person name="Copeland A."/>
            <person name="Lucas S."/>
            <person name="Lapidus A."/>
            <person name="Glavina del Rio T."/>
            <person name="Dalin E."/>
            <person name="Tice H."/>
            <person name="Bruce D."/>
            <person name="Goodwin L."/>
            <person name="Pitluck S."/>
            <person name="Kiss H."/>
            <person name="Brettin T."/>
            <person name="Detter J.C."/>
            <person name="Han C."/>
            <person name="Kuske C.R."/>
            <person name="Schmutz J."/>
            <person name="Larimer F."/>
            <person name="Land M."/>
            <person name="Hauser L."/>
            <person name="Kyrpides N."/>
            <person name="Mikhailova N."/>
            <person name="Ingram L."/>
            <person name="Richardson P."/>
        </authorList>
    </citation>
    <scope>NUCLEOTIDE SEQUENCE [LARGE SCALE GENOMIC DNA]</scope>
    <source>
        <strain>ATCC 8739 / DSM 1576 / NBRC 3972 / NCIMB 8545 / WDCM 00012 / Crooks</strain>
    </source>
</reference>
<accession>B1IWZ3</accession>